<proteinExistence type="inferred from homology"/>
<protein>
    <recommendedName>
        <fullName evidence="1">6,7-dimethyl-8-ribityllumazine synthase</fullName>
        <shortName evidence="1">DMRL synthase</shortName>
        <shortName evidence="1">LS</shortName>
        <shortName evidence="1">Lumazine synthase</shortName>
        <ecNumber evidence="1">2.5.1.78</ecNumber>
    </recommendedName>
</protein>
<comment type="function">
    <text evidence="1">Catalyzes the formation of 6,7-dimethyl-8-ribityllumazine by condensation of 5-amino-6-(D-ribitylamino)uracil with 3,4-dihydroxy-2-butanone 4-phosphate. This is the penultimate step in the biosynthesis of riboflavin.</text>
</comment>
<comment type="catalytic activity">
    <reaction evidence="1">
        <text>(2S)-2-hydroxy-3-oxobutyl phosphate + 5-amino-6-(D-ribitylamino)uracil = 6,7-dimethyl-8-(1-D-ribityl)lumazine + phosphate + 2 H2O + H(+)</text>
        <dbReference type="Rhea" id="RHEA:26152"/>
        <dbReference type="ChEBI" id="CHEBI:15377"/>
        <dbReference type="ChEBI" id="CHEBI:15378"/>
        <dbReference type="ChEBI" id="CHEBI:15934"/>
        <dbReference type="ChEBI" id="CHEBI:43474"/>
        <dbReference type="ChEBI" id="CHEBI:58201"/>
        <dbReference type="ChEBI" id="CHEBI:58830"/>
        <dbReference type="EC" id="2.5.1.78"/>
    </reaction>
</comment>
<comment type="pathway">
    <text evidence="1">Cofactor biosynthesis; riboflavin biosynthesis; riboflavin from 2-hydroxy-3-oxobutyl phosphate and 5-amino-6-(D-ribitylamino)uracil: step 1/2.</text>
</comment>
<comment type="similarity">
    <text evidence="1">Belongs to the DMRL synthase family.</text>
</comment>
<sequence>MEIGQYQPNLEGDGLRIGIVQSRFNEPVCNGLADACVEELERLGVSGEDVLLVTVPGALEIPLALQKLAESNQFDALIALGAVIRGETYHFELVSNESGAGITRIALDFNTPIANAVLTTETDEQAIARMTEKGRDAARVAVEMANLTMTLDQLSDDEEDEEDEDDEDEEERA</sequence>
<keyword id="KW-0686">Riboflavin biosynthesis</keyword>
<keyword id="KW-0808">Transferase</keyword>
<accession>A1V1K5</accession>
<evidence type="ECO:0000255" key="1">
    <source>
        <dbReference type="HAMAP-Rule" id="MF_00178"/>
    </source>
</evidence>
<evidence type="ECO:0000256" key="2">
    <source>
        <dbReference type="SAM" id="MobiDB-lite"/>
    </source>
</evidence>
<name>RISB_BURMS</name>
<dbReference type="EC" id="2.5.1.78" evidence="1"/>
<dbReference type="EMBL" id="CP000526">
    <property type="protein sequence ID" value="ABM50411.1"/>
    <property type="molecule type" value="Genomic_DNA"/>
</dbReference>
<dbReference type="RefSeq" id="WP_004186056.1">
    <property type="nucleotide sequence ID" value="NC_008785.1"/>
</dbReference>
<dbReference type="SMR" id="A1V1K5"/>
<dbReference type="GeneID" id="93061204"/>
<dbReference type="KEGG" id="bmv:BMASAVP1_A0763"/>
<dbReference type="HOGENOM" id="CLU_089358_1_2_4"/>
<dbReference type="UniPathway" id="UPA00275">
    <property type="reaction ID" value="UER00404"/>
</dbReference>
<dbReference type="GO" id="GO:0005829">
    <property type="term" value="C:cytosol"/>
    <property type="evidence" value="ECO:0007669"/>
    <property type="project" value="TreeGrafter"/>
</dbReference>
<dbReference type="GO" id="GO:0009349">
    <property type="term" value="C:riboflavin synthase complex"/>
    <property type="evidence" value="ECO:0007669"/>
    <property type="project" value="InterPro"/>
</dbReference>
<dbReference type="GO" id="GO:0000906">
    <property type="term" value="F:6,7-dimethyl-8-ribityllumazine synthase activity"/>
    <property type="evidence" value="ECO:0007669"/>
    <property type="project" value="UniProtKB-UniRule"/>
</dbReference>
<dbReference type="GO" id="GO:0009231">
    <property type="term" value="P:riboflavin biosynthetic process"/>
    <property type="evidence" value="ECO:0007669"/>
    <property type="project" value="UniProtKB-UniRule"/>
</dbReference>
<dbReference type="CDD" id="cd09209">
    <property type="entry name" value="Lumazine_synthase-I"/>
    <property type="match status" value="1"/>
</dbReference>
<dbReference type="Gene3D" id="3.40.50.960">
    <property type="entry name" value="Lumazine/riboflavin synthase"/>
    <property type="match status" value="1"/>
</dbReference>
<dbReference type="HAMAP" id="MF_00178">
    <property type="entry name" value="Lumazine_synth"/>
    <property type="match status" value="1"/>
</dbReference>
<dbReference type="InterPro" id="IPR034964">
    <property type="entry name" value="LS"/>
</dbReference>
<dbReference type="InterPro" id="IPR002180">
    <property type="entry name" value="LS/RS"/>
</dbReference>
<dbReference type="InterPro" id="IPR036467">
    <property type="entry name" value="LS/RS_sf"/>
</dbReference>
<dbReference type="NCBIfam" id="TIGR00114">
    <property type="entry name" value="lumazine-synth"/>
    <property type="match status" value="1"/>
</dbReference>
<dbReference type="PANTHER" id="PTHR21058:SF0">
    <property type="entry name" value="6,7-DIMETHYL-8-RIBITYLLUMAZINE SYNTHASE"/>
    <property type="match status" value="1"/>
</dbReference>
<dbReference type="PANTHER" id="PTHR21058">
    <property type="entry name" value="6,7-DIMETHYL-8-RIBITYLLUMAZINE SYNTHASE DMRL SYNTHASE LUMAZINE SYNTHASE"/>
    <property type="match status" value="1"/>
</dbReference>
<dbReference type="Pfam" id="PF00885">
    <property type="entry name" value="DMRL_synthase"/>
    <property type="match status" value="1"/>
</dbReference>
<dbReference type="SUPFAM" id="SSF52121">
    <property type="entry name" value="Lumazine synthase"/>
    <property type="match status" value="1"/>
</dbReference>
<organism>
    <name type="scientific">Burkholderia mallei (strain SAVP1)</name>
    <dbReference type="NCBI Taxonomy" id="320388"/>
    <lineage>
        <taxon>Bacteria</taxon>
        <taxon>Pseudomonadati</taxon>
        <taxon>Pseudomonadota</taxon>
        <taxon>Betaproteobacteria</taxon>
        <taxon>Burkholderiales</taxon>
        <taxon>Burkholderiaceae</taxon>
        <taxon>Burkholderia</taxon>
        <taxon>pseudomallei group</taxon>
    </lineage>
</organism>
<feature type="chain" id="PRO_1000040382" description="6,7-dimethyl-8-ribityllumazine synthase">
    <location>
        <begin position="1"/>
        <end position="173"/>
    </location>
</feature>
<feature type="region of interest" description="Disordered" evidence="2">
    <location>
        <begin position="150"/>
        <end position="173"/>
    </location>
</feature>
<feature type="compositionally biased region" description="Acidic residues" evidence="2">
    <location>
        <begin position="154"/>
        <end position="173"/>
    </location>
</feature>
<feature type="active site" description="Proton donor" evidence="1">
    <location>
        <position position="90"/>
    </location>
</feature>
<feature type="binding site" evidence="1">
    <location>
        <position position="24"/>
    </location>
    <ligand>
        <name>5-amino-6-(D-ribitylamino)uracil</name>
        <dbReference type="ChEBI" id="CHEBI:15934"/>
    </ligand>
</feature>
<feature type="binding site" evidence="1">
    <location>
        <begin position="58"/>
        <end position="60"/>
    </location>
    <ligand>
        <name>5-amino-6-(D-ribitylamino)uracil</name>
        <dbReference type="ChEBI" id="CHEBI:15934"/>
    </ligand>
</feature>
<feature type="binding site" evidence="1">
    <location>
        <begin position="82"/>
        <end position="84"/>
    </location>
    <ligand>
        <name>5-amino-6-(D-ribitylamino)uracil</name>
        <dbReference type="ChEBI" id="CHEBI:15934"/>
    </ligand>
</feature>
<feature type="binding site" evidence="1">
    <location>
        <begin position="87"/>
        <end position="88"/>
    </location>
    <ligand>
        <name>(2S)-2-hydroxy-3-oxobutyl phosphate</name>
        <dbReference type="ChEBI" id="CHEBI:58830"/>
    </ligand>
</feature>
<feature type="binding site" evidence="1">
    <location>
        <position position="115"/>
    </location>
    <ligand>
        <name>5-amino-6-(D-ribitylamino)uracil</name>
        <dbReference type="ChEBI" id="CHEBI:15934"/>
    </ligand>
</feature>
<feature type="binding site" evidence="1">
    <location>
        <position position="129"/>
    </location>
    <ligand>
        <name>(2S)-2-hydroxy-3-oxobutyl phosphate</name>
        <dbReference type="ChEBI" id="CHEBI:58830"/>
    </ligand>
</feature>
<reference key="1">
    <citation type="journal article" date="2010" name="Genome Biol. Evol.">
        <title>Continuing evolution of Burkholderia mallei through genome reduction and large-scale rearrangements.</title>
        <authorList>
            <person name="Losada L."/>
            <person name="Ronning C.M."/>
            <person name="DeShazer D."/>
            <person name="Woods D."/>
            <person name="Fedorova N."/>
            <person name="Kim H.S."/>
            <person name="Shabalina S.A."/>
            <person name="Pearson T.R."/>
            <person name="Brinkac L."/>
            <person name="Tan P."/>
            <person name="Nandi T."/>
            <person name="Crabtree J."/>
            <person name="Badger J."/>
            <person name="Beckstrom-Sternberg S."/>
            <person name="Saqib M."/>
            <person name="Schutzer S.E."/>
            <person name="Keim P."/>
            <person name="Nierman W.C."/>
        </authorList>
    </citation>
    <scope>NUCLEOTIDE SEQUENCE [LARGE SCALE GENOMIC DNA]</scope>
    <source>
        <strain>SAVP1</strain>
    </source>
</reference>
<gene>
    <name evidence="1" type="primary">ribH</name>
    <name type="ordered locus">BMASAVP1_A0763</name>
</gene>